<keyword id="KW-0687">Ribonucleoprotein</keyword>
<keyword id="KW-0689">Ribosomal protein</keyword>
<keyword id="KW-0694">RNA-binding</keyword>
<keyword id="KW-0699">rRNA-binding</keyword>
<organism>
    <name type="scientific">Bartonella bacilliformis (strain ATCC 35685 / KC583 / Herrer 020/F12,63)</name>
    <dbReference type="NCBI Taxonomy" id="360095"/>
    <lineage>
        <taxon>Bacteria</taxon>
        <taxon>Pseudomonadati</taxon>
        <taxon>Pseudomonadota</taxon>
        <taxon>Alphaproteobacteria</taxon>
        <taxon>Hyphomicrobiales</taxon>
        <taxon>Bartonellaceae</taxon>
        <taxon>Bartonella</taxon>
    </lineage>
</organism>
<feature type="chain" id="PRO_0000354285" description="Small ribosomal subunit protein uS19">
    <location>
        <begin position="1"/>
        <end position="92"/>
    </location>
</feature>
<proteinExistence type="inferred from homology"/>
<sequence length="92" mass="10403">MVRSVWKGPFVDGYLLGKAEKVRASGRNEVIKIWSRRSTILPQFVGLTFGVHNGNKHIPVFVSEEMVGHKFGEFAPTRTYYGHGADKKAKRK</sequence>
<reference key="1">
    <citation type="submission" date="2006-12" db="EMBL/GenBank/DDBJ databases">
        <authorList>
            <person name="Hendrix L."/>
            <person name="Mohamoud Y."/>
            <person name="Radune D."/>
            <person name="Shvartsbeyn A."/>
            <person name="Daugherty S."/>
            <person name="Dodson R."/>
            <person name="Durkin A.S."/>
            <person name="Harkins D."/>
            <person name="Huot H."/>
            <person name="Kothari S.P."/>
            <person name="Madupu R."/>
            <person name="Li J."/>
            <person name="Nelson W.C."/>
            <person name="Shrivastava S."/>
            <person name="Giglio M.G."/>
            <person name="Haft D."/>
            <person name="Selengut J."/>
            <person name="Fraser-Ligget C."/>
            <person name="Seshadri R."/>
        </authorList>
    </citation>
    <scope>NUCLEOTIDE SEQUENCE [LARGE SCALE GENOMIC DNA]</scope>
    <source>
        <strain>ATCC 35685 / KC583 / Herrer 020/F12,63</strain>
    </source>
</reference>
<comment type="function">
    <text evidence="1">Protein S19 forms a complex with S13 that binds strongly to the 16S ribosomal RNA.</text>
</comment>
<comment type="similarity">
    <text evidence="1">Belongs to the universal ribosomal protein uS19 family.</text>
</comment>
<evidence type="ECO:0000255" key="1">
    <source>
        <dbReference type="HAMAP-Rule" id="MF_00531"/>
    </source>
</evidence>
<evidence type="ECO:0000305" key="2"/>
<protein>
    <recommendedName>
        <fullName evidence="1">Small ribosomal subunit protein uS19</fullName>
    </recommendedName>
    <alternativeName>
        <fullName evidence="2">30S ribosomal protein S19</fullName>
    </alternativeName>
</protein>
<accession>A1USL8</accession>
<name>RS19_BARBK</name>
<gene>
    <name evidence="1" type="primary">rpsS1</name>
    <name type="ordered locus">BARBAKC583_0670</name>
</gene>
<gene>
    <name evidence="1" type="primary">rpsS2</name>
    <name type="ordered locus">BARBAKC583_0702</name>
</gene>
<dbReference type="EMBL" id="CP000524">
    <property type="protein sequence ID" value="ABM44598.1"/>
    <property type="molecule type" value="Genomic_DNA"/>
</dbReference>
<dbReference type="EMBL" id="CP000524">
    <property type="protein sequence ID" value="ABM45217.1"/>
    <property type="molecule type" value="Genomic_DNA"/>
</dbReference>
<dbReference type="SMR" id="A1USL8"/>
<dbReference type="STRING" id="360095.BARBAKC583_0670"/>
<dbReference type="GeneID" id="4684999"/>
<dbReference type="KEGG" id="bbk:BARBAKC583_0670"/>
<dbReference type="KEGG" id="bbk:BARBAKC583_0702"/>
<dbReference type="PATRIC" id="fig|360095.6.peg.681"/>
<dbReference type="eggNOG" id="COG0185">
    <property type="taxonomic scope" value="Bacteria"/>
</dbReference>
<dbReference type="HOGENOM" id="CLU_144911_0_1_5"/>
<dbReference type="OrthoDB" id="9797833at2"/>
<dbReference type="Proteomes" id="UP000000643">
    <property type="component" value="Chromosome"/>
</dbReference>
<dbReference type="GO" id="GO:0005737">
    <property type="term" value="C:cytoplasm"/>
    <property type="evidence" value="ECO:0007669"/>
    <property type="project" value="UniProtKB-ARBA"/>
</dbReference>
<dbReference type="GO" id="GO:0015935">
    <property type="term" value="C:small ribosomal subunit"/>
    <property type="evidence" value="ECO:0007669"/>
    <property type="project" value="InterPro"/>
</dbReference>
<dbReference type="GO" id="GO:0019843">
    <property type="term" value="F:rRNA binding"/>
    <property type="evidence" value="ECO:0007669"/>
    <property type="project" value="UniProtKB-UniRule"/>
</dbReference>
<dbReference type="GO" id="GO:0003735">
    <property type="term" value="F:structural constituent of ribosome"/>
    <property type="evidence" value="ECO:0007669"/>
    <property type="project" value="InterPro"/>
</dbReference>
<dbReference type="GO" id="GO:0000028">
    <property type="term" value="P:ribosomal small subunit assembly"/>
    <property type="evidence" value="ECO:0007669"/>
    <property type="project" value="TreeGrafter"/>
</dbReference>
<dbReference type="GO" id="GO:0006412">
    <property type="term" value="P:translation"/>
    <property type="evidence" value="ECO:0007669"/>
    <property type="project" value="UniProtKB-UniRule"/>
</dbReference>
<dbReference type="FunFam" id="3.30.860.10:FF:000001">
    <property type="entry name" value="30S ribosomal protein S19"/>
    <property type="match status" value="1"/>
</dbReference>
<dbReference type="Gene3D" id="3.30.860.10">
    <property type="entry name" value="30s Ribosomal Protein S19, Chain A"/>
    <property type="match status" value="1"/>
</dbReference>
<dbReference type="HAMAP" id="MF_00531">
    <property type="entry name" value="Ribosomal_uS19"/>
    <property type="match status" value="1"/>
</dbReference>
<dbReference type="InterPro" id="IPR002222">
    <property type="entry name" value="Ribosomal_uS19"/>
</dbReference>
<dbReference type="InterPro" id="IPR005732">
    <property type="entry name" value="Ribosomal_uS19_bac-type"/>
</dbReference>
<dbReference type="InterPro" id="IPR020934">
    <property type="entry name" value="Ribosomal_uS19_CS"/>
</dbReference>
<dbReference type="InterPro" id="IPR023575">
    <property type="entry name" value="Ribosomal_uS19_SF"/>
</dbReference>
<dbReference type="NCBIfam" id="TIGR01050">
    <property type="entry name" value="rpsS_bact"/>
    <property type="match status" value="1"/>
</dbReference>
<dbReference type="PANTHER" id="PTHR11880">
    <property type="entry name" value="RIBOSOMAL PROTEIN S19P FAMILY MEMBER"/>
    <property type="match status" value="1"/>
</dbReference>
<dbReference type="PANTHER" id="PTHR11880:SF8">
    <property type="entry name" value="SMALL RIBOSOMAL SUBUNIT PROTEIN US19M"/>
    <property type="match status" value="1"/>
</dbReference>
<dbReference type="Pfam" id="PF00203">
    <property type="entry name" value="Ribosomal_S19"/>
    <property type="match status" value="1"/>
</dbReference>
<dbReference type="PIRSF" id="PIRSF002144">
    <property type="entry name" value="Ribosomal_S19"/>
    <property type="match status" value="1"/>
</dbReference>
<dbReference type="PRINTS" id="PR00975">
    <property type="entry name" value="RIBOSOMALS19"/>
</dbReference>
<dbReference type="SUPFAM" id="SSF54570">
    <property type="entry name" value="Ribosomal protein S19"/>
    <property type="match status" value="1"/>
</dbReference>
<dbReference type="PROSITE" id="PS00323">
    <property type="entry name" value="RIBOSOMAL_S19"/>
    <property type="match status" value="1"/>
</dbReference>